<feature type="chain" id="PRO_0000460788" description="Chitin synthase 4">
    <location>
        <begin position="1"/>
        <end position="1238"/>
    </location>
</feature>
<feature type="transmembrane region" description="Helical" evidence="1">
    <location>
        <begin position="200"/>
        <end position="220"/>
    </location>
</feature>
<feature type="transmembrane region" description="Helical" evidence="1">
    <location>
        <begin position="235"/>
        <end position="255"/>
    </location>
</feature>
<feature type="transmembrane region" description="Helical" evidence="1">
    <location>
        <begin position="487"/>
        <end position="507"/>
    </location>
</feature>
<feature type="transmembrane region" description="Helical" evidence="1">
    <location>
        <begin position="1062"/>
        <end position="1082"/>
    </location>
</feature>
<feature type="transmembrane region" description="Helical" evidence="1">
    <location>
        <begin position="1087"/>
        <end position="1107"/>
    </location>
</feature>
<feature type="transmembrane region" description="Helical" evidence="1">
    <location>
        <begin position="1115"/>
        <end position="1135"/>
    </location>
</feature>
<feature type="region of interest" description="Disordered" evidence="3">
    <location>
        <begin position="1"/>
        <end position="93"/>
    </location>
</feature>
<feature type="region of interest" description="Disordered" evidence="3">
    <location>
        <begin position="132"/>
        <end position="190"/>
    </location>
</feature>
<feature type="region of interest" description="Disordered" evidence="3">
    <location>
        <begin position="548"/>
        <end position="570"/>
    </location>
</feature>
<feature type="region of interest" description="Disordered" evidence="3">
    <location>
        <begin position="582"/>
        <end position="606"/>
    </location>
</feature>
<feature type="compositionally biased region" description="Basic and acidic residues" evidence="3">
    <location>
        <begin position="14"/>
        <end position="34"/>
    </location>
</feature>
<feature type="compositionally biased region" description="Polar residues" evidence="3">
    <location>
        <begin position="71"/>
        <end position="80"/>
    </location>
</feature>
<feature type="compositionally biased region" description="Polar residues" evidence="3">
    <location>
        <begin position="133"/>
        <end position="142"/>
    </location>
</feature>
<feature type="compositionally biased region" description="Basic and acidic residues" evidence="3">
    <location>
        <begin position="175"/>
        <end position="190"/>
    </location>
</feature>
<feature type="compositionally biased region" description="Polar residues" evidence="3">
    <location>
        <begin position="553"/>
        <end position="562"/>
    </location>
</feature>
<feature type="glycosylation site" description="N-linked (GlcNAc...) asparagine" evidence="2">
    <location>
        <position position="50"/>
    </location>
</feature>
<feature type="glycosylation site" description="N-linked (GlcNAc...) asparagine" evidence="2">
    <location>
        <position position="180"/>
    </location>
</feature>
<feature type="glycosylation site" description="N-linked (GlcNAc...) asparagine" evidence="2">
    <location>
        <position position="365"/>
    </location>
</feature>
<feature type="glycosylation site" description="N-linked (GlcNAc...) asparagine" evidence="2">
    <location>
        <position position="404"/>
    </location>
</feature>
<feature type="glycosylation site" description="N-linked (GlcNAc...) asparagine" evidence="2">
    <location>
        <position position="426"/>
    </location>
</feature>
<feature type="glycosylation site" description="N-linked (GlcNAc...) asparagine" evidence="2">
    <location>
        <position position="617"/>
    </location>
</feature>
<feature type="glycosylation site" description="N-linked (GlcNAc...) asparagine" evidence="2">
    <location>
        <position position="903"/>
    </location>
</feature>
<feature type="glycosylation site" description="N-linked (GlcNAc...) asparagine" evidence="2">
    <location>
        <position position="1030"/>
    </location>
</feature>
<name>CHS4_EXODE</name>
<evidence type="ECO:0000255" key="1"/>
<evidence type="ECO:0000255" key="2">
    <source>
        <dbReference type="PROSITE-ProRule" id="PRU00498"/>
    </source>
</evidence>
<evidence type="ECO:0000256" key="3">
    <source>
        <dbReference type="SAM" id="MobiDB-lite"/>
    </source>
</evidence>
<evidence type="ECO:0000269" key="4">
    <source>
    </source>
</evidence>
<evidence type="ECO:0000269" key="5">
    <source>
    </source>
</evidence>
<evidence type="ECO:0000303" key="6">
    <source>
    </source>
</evidence>
<evidence type="ECO:0000305" key="7"/>
<organism>
    <name type="scientific">Exophiala dermatitidis</name>
    <name type="common">Black yeast-like fungus</name>
    <name type="synonym">Wangiella dermatitidis</name>
    <dbReference type="NCBI Taxonomy" id="5970"/>
    <lineage>
        <taxon>Eukaryota</taxon>
        <taxon>Fungi</taxon>
        <taxon>Dikarya</taxon>
        <taxon>Ascomycota</taxon>
        <taxon>Pezizomycotina</taxon>
        <taxon>Eurotiomycetes</taxon>
        <taxon>Chaetothyriomycetidae</taxon>
        <taxon>Chaetothyriales</taxon>
        <taxon>Herpotrichiellaceae</taxon>
        <taxon>Exophiala</taxon>
    </lineage>
</organism>
<sequence>MAEPRMPRPAISPTRDKSHSPYRESPSRRLRDVETGYNPPQNPPYPPQRNGTEPYPPSPSSRTADWEPIMSNPNPMSQSDLGRKKSLIRPERNRIDRDHPNYYYRKHAANMEVLPSTTGNDPVVEDLAEHRTVSSGSTQQDTSIEEEVVGNPQKSRMPGKLEPVGKKKAPRKLVRKDTRNLTEEEKRRQKELDKIKPPSIWNIYCAVVTFWAPDCLLQCFGMPARAQRRAWKEKVGLISIILLIAAFVGFLTFGFTQAVCAAPGLRLKINHVDRSYMIFHGGAYNLDGSMHPAARGIPLDANVLYDLPHKYGGQDGSFMFQKVNGACKGLITLAEGSDVPTNSDGDLAWYFPCTAFNQDGSSEVNLTSPYYLGYACHTTAKARNTFYSLKKAGDVYFTWDDIKNKSRNLAVYSGSVVDLDLLKWFNKSQVAWPQQFDDLRENGRVRGMDLTHVLQSATDKQVGRCLTQIAKVGSIDTESVGCIASKVVLYVSLVFILAIVAAKFFLALAFQWFLARRFAAAKTSQTSDPKKRAKQIEDWTDDIYKPAPKITDPASTVTGSDGRTSKRGSMFLPQTSRFTSPYAVDRRSSRPPPTTMTSQSSNAKLLPGGNPYKSGFNSSQNTLDLHSRMSVGASRSSLLLSGQETRYSAVMDNLDPNGPVGFIHENVVPQPPPEWQPFGYPLAHVICLVTAYSEGEDGIRTTLDSIATTDYPNSHKAILVVCDGMIKGKGEAQSTPDIVLGMMGDFVIAPEDVQAFSYVAVSSGAKRHNMAKVYAGFYDYGPKSRIDPTKQQRVPMMVVVKCGTPDEATKSKPGNRGKRDSQIILMSFLQKVMFDERMTELEYEMFNGLWKVTGMSPDFYEMVLMVDADTKVFPDSLTHMVSAMVKDPEIMGLCGETKIANKNASWVSRIQVFEYFISHHLSKSFESVFGGVTCLPGCFCMYRIKSPKGGQNYWVPILANPDIVEHYSENVVDTLHKKNLLLLGEDRYLSTLMLKTFPKRKQVFVPQAVCKTTVPDEFKVLLSQRRRWINSTVHNLMELVLVRDLCGTFCFSMQFVVFIELIGTLVLPAAISFTFYLIILSIVKKPVPVIPLVLLALILGLPAILIVLTAHRWSYILWMGIYLLSLPIWNFVLPAYAFWKFDDFSWGETRKTAGEKTKKAGLEYEGEFDSSKITMKRWGDFERGKLDQRSSVCGILVETNLCHLFRTASSGERKCLEPATSYASTERLRFYAWVRTLP</sequence>
<comment type="function">
    <text evidence="4">Polymerizes chitin, a structural polymer of the cell wall and septum, by transferring the sugar moiety of UDP-GlcNAc to the non-reducing end of the growing chitin polymer (PubMed:10569783). CHS4 synthesizes a large amount of chitin and appears to play a role in the process of cell separation (PubMed:10569783). CHS4 is particularly well suited for functioning at the higher temperatures associated with its poorly characterized saprophic environment and with human infection (PubMed:10569783).</text>
</comment>
<comment type="catalytic activity">
    <reaction evidence="4">
        <text>[(1-&gt;4)-N-acetyl-beta-D-glucosaminyl](n) + UDP-N-acetyl-alpha-D-glucosamine = [(1-&gt;4)-N-acetyl-beta-D-glucosaminyl](n+1) + UDP + H(+)</text>
        <dbReference type="Rhea" id="RHEA:16637"/>
        <dbReference type="Rhea" id="RHEA-COMP:9593"/>
        <dbReference type="Rhea" id="RHEA-COMP:9595"/>
        <dbReference type="ChEBI" id="CHEBI:15378"/>
        <dbReference type="ChEBI" id="CHEBI:17029"/>
        <dbReference type="ChEBI" id="CHEBI:57705"/>
        <dbReference type="ChEBI" id="CHEBI:58223"/>
        <dbReference type="EC" id="2.4.1.16"/>
    </reaction>
    <physiologicalReaction direction="left-to-right" evidence="4">
        <dbReference type="Rhea" id="RHEA:16638"/>
    </physiologicalReaction>
</comment>
<comment type="activity regulation">
    <text evidence="4">Activity is stimulated by Mg(2+), and is more inhibited by polyoxin D than by nikkomycin.</text>
</comment>
<comment type="biophysicochemical properties">
    <phDependence>
        <text evidence="4">Optimum pH is 7.5.</text>
    </phDependence>
    <temperatureDependence>
        <text evidence="4">Optimum temperature is from 30 to 45 degrees Celsius.</text>
    </temperatureDependence>
</comment>
<comment type="subcellular location">
    <subcellularLocation>
        <location evidence="7">Cell membrane</location>
        <topology evidence="1">Multi-pass membrane protein</topology>
    </subcellularLocation>
</comment>
<comment type="induction">
    <text evidence="5">Expression is increased in cells shifted from 25 degrees Celsius to 37 degrees Celsius.</text>
</comment>
<comment type="PTM">
    <text evidence="4">Maximal activity requires trypsin activation, suggesting a zymogenic nature.</text>
</comment>
<comment type="disruption phenotype">
    <text evidence="4 5">Leads to reduced chitin content, abnormal yeast clumpiness and budding kinetics, and increased melanin secretion (PubMed:10569783). Does not affect virulence in an acute mouse model (PubMed:10569783). Also leads to increased expression of the other chitin synthase genes for compensation (PubMed:12213927).</text>
</comment>
<comment type="similarity">
    <text evidence="7">Belongs to the chitin synthase family. Class IV subfamily.</text>
</comment>
<proteinExistence type="evidence at protein level"/>
<dbReference type="EC" id="2.4.1.16" evidence="4"/>
<dbReference type="EMBL" id="AF126146">
    <property type="protein sequence ID" value="AAD28744.1"/>
    <property type="molecule type" value="Genomic_DNA"/>
</dbReference>
<dbReference type="CAZy" id="GT2">
    <property type="family name" value="Glycosyltransferase Family 2"/>
</dbReference>
<dbReference type="VEuPathDB" id="FungiDB:HMPREF1120_07721"/>
<dbReference type="GO" id="GO:0030428">
    <property type="term" value="C:cell septum"/>
    <property type="evidence" value="ECO:0007669"/>
    <property type="project" value="TreeGrafter"/>
</dbReference>
<dbReference type="GO" id="GO:0005886">
    <property type="term" value="C:plasma membrane"/>
    <property type="evidence" value="ECO:0007669"/>
    <property type="project" value="UniProtKB-SubCell"/>
</dbReference>
<dbReference type="GO" id="GO:0004100">
    <property type="term" value="F:chitin synthase activity"/>
    <property type="evidence" value="ECO:0007669"/>
    <property type="project" value="UniProtKB-EC"/>
</dbReference>
<dbReference type="GO" id="GO:0006031">
    <property type="term" value="P:chitin biosynthetic process"/>
    <property type="evidence" value="ECO:0007669"/>
    <property type="project" value="TreeGrafter"/>
</dbReference>
<dbReference type="CDD" id="cd04190">
    <property type="entry name" value="Chitin_synth_C"/>
    <property type="match status" value="1"/>
</dbReference>
<dbReference type="InterPro" id="IPR004835">
    <property type="entry name" value="Chitin_synth"/>
</dbReference>
<dbReference type="InterPro" id="IPR054295">
    <property type="entry name" value="CHS4-like_dom"/>
</dbReference>
<dbReference type="InterPro" id="IPR029044">
    <property type="entry name" value="Nucleotide-diphossugar_trans"/>
</dbReference>
<dbReference type="PANTHER" id="PTHR22914">
    <property type="entry name" value="CHITIN SYNTHASE"/>
    <property type="match status" value="1"/>
</dbReference>
<dbReference type="PANTHER" id="PTHR22914:SF16">
    <property type="entry name" value="CHITIN SYNTHASE 3"/>
    <property type="match status" value="1"/>
</dbReference>
<dbReference type="Pfam" id="PF03142">
    <property type="entry name" value="Chitin_synth_2"/>
    <property type="match status" value="1"/>
</dbReference>
<dbReference type="Pfam" id="PF22997">
    <property type="entry name" value="CHS4"/>
    <property type="match status" value="1"/>
</dbReference>
<dbReference type="SUPFAM" id="SSF53448">
    <property type="entry name" value="Nucleotide-diphospho-sugar transferases"/>
    <property type="match status" value="1"/>
</dbReference>
<keyword id="KW-1003">Cell membrane</keyword>
<keyword id="KW-0325">Glycoprotein</keyword>
<keyword id="KW-0328">Glycosyltransferase</keyword>
<keyword id="KW-0472">Membrane</keyword>
<keyword id="KW-0808">Transferase</keyword>
<keyword id="KW-0812">Transmembrane</keyword>
<keyword id="KW-1133">Transmembrane helix</keyword>
<keyword id="KW-0865">Zymogen</keyword>
<protein>
    <recommendedName>
        <fullName evidence="6">Chitin synthase 4</fullName>
        <ecNumber evidence="4">2.4.1.16</ecNumber>
    </recommendedName>
    <alternativeName>
        <fullName evidence="7">Chitin-UDP acetyl-glucosaminyl transferase 4</fullName>
    </alternativeName>
    <alternativeName>
        <fullName evidence="6">Class-IV chitin synthase 4</fullName>
    </alternativeName>
</protein>
<reference key="1">
    <citation type="journal article" date="1999" name="Infect. Immun.">
        <title>WdChs4p, a homolog of chitin synthase 3 in Saccharomyces cerevisiae, alone cannot support growth of Wangiella (Exophiala) dermatitidis at the temperature of infection.</title>
        <authorList>
            <person name="Wang Z."/>
            <person name="Zheng L."/>
            <person name="Hauser M."/>
            <person name="Becker J.M."/>
            <person name="Szaniszlo P.J."/>
        </authorList>
    </citation>
    <scope>NUCLEOTIDE SEQUENCE [GENOMIC DNA]</scope>
    <scope>FUNCTION</scope>
    <scope>CATALYTIC ACTIVITY</scope>
    <scope>DISRUPTION PHENOTYPE</scope>
    <scope>ACTIVITY REGULATION</scope>
    <scope>BIOPHYSICOCHEMICAL PROPERTIES</scope>
    <scope>ZYMOGEN</scope>
    <source>
        <strain>8656</strain>
    </source>
</reference>
<reference key="2">
    <citation type="journal article" date="2002" name="Microbiology">
        <title>Compensatory expression of five chitin synthase genes, a response to stress stimuli, in Wangiella (Exophiala) dermatitidis, a melanized fungal pathogen of humans.</title>
        <authorList>
            <person name="Wang Q."/>
            <person name="Liu H."/>
            <person name="Szaniszlo P.J."/>
        </authorList>
    </citation>
    <scope>INDUCTION</scope>
    <scope>DISRUPTION PHENOTYPE</scope>
</reference>
<accession>Q9Y795</accession>
<gene>
    <name evidence="6" type="primary">CHS4</name>
</gene>